<keyword id="KW-0472">Membrane</keyword>
<keyword id="KW-1185">Reference proteome</keyword>
<keyword id="KW-0812">Transmembrane</keyword>
<keyword id="KW-1133">Transmembrane helix</keyword>
<gene>
    <name type="ordered locus">YJL163C</name>
    <name type="ORF">J0544</name>
</gene>
<evidence type="ECO:0000255" key="1"/>
<evidence type="ECO:0000256" key="2">
    <source>
        <dbReference type="SAM" id="MobiDB-lite"/>
    </source>
</evidence>
<sequence length="555" mass="61525">MSNEDETTRLMSSDEMDYLLETAGINALEEIISQNDSTGINLDTNETAQDSSYDSIRRSPSILSVAKSVEGEHGRRKLLCLYGLVMIICIAESISMTATIPLVMDKVAEGISDENGHYDSVAVQTIVSSISSSTMMIAGAISIFMAGKWGELSDRIGRVRVFKYMSGIRVIGLLTHVFTLSSKMKYHKWAIVLTACIVPSFGGLFALVANGNSYVSDIVKTEHRMVTIGIMMSCIYATMGVGPMFGSFLVKWTHGNGFIPIYTSIAFVILALIICETIMVEPRHETQMAHSQSTYTKRREKLRSQSGSDDARNYQSVTYGKFQIMRLMDLLAPVKKLWLKPDSAGSLVPRHTVILLIVLDILFVCGTTSCMPALILFSTYEYKWHAVELGYFISILGIGRGVVLLVVSPTLLYTLKRIYQHLNHSIDKIDIFCIQFSMIVITLSLFVMIRFGEKTPTSMIIFALLQALSAFCSPTLQSGIIKYTSKKHTGEMFGAMALVRSCVMLVIPPILLKLYGSTVSVNPSLFMYIPFSTSIVAILLTFFLRIYKNPPLDGP</sequence>
<organism>
    <name type="scientific">Saccharomyces cerevisiae (strain ATCC 204508 / S288c)</name>
    <name type="common">Baker's yeast</name>
    <dbReference type="NCBI Taxonomy" id="559292"/>
    <lineage>
        <taxon>Eukaryota</taxon>
        <taxon>Fungi</taxon>
        <taxon>Dikarya</taxon>
        <taxon>Ascomycota</taxon>
        <taxon>Saccharomycotina</taxon>
        <taxon>Saccharomycetes</taxon>
        <taxon>Saccharomycetales</taxon>
        <taxon>Saccharomycetaceae</taxon>
        <taxon>Saccharomyces</taxon>
    </lineage>
</organism>
<comment type="subcellular location">
    <subcellularLocation>
        <location>Membrane</location>
        <topology>Multi-pass membrane protein</topology>
    </subcellularLocation>
</comment>
<proteinExistence type="evidence at protein level"/>
<feature type="chain" id="PRO_0000203027" description="Uncharacterized membrane protein YJL163C">
    <location>
        <begin position="1"/>
        <end position="555"/>
    </location>
</feature>
<feature type="topological domain" description="Extracellular" evidence="1">
    <location>
        <begin position="1"/>
        <end position="83"/>
    </location>
</feature>
<feature type="transmembrane region" description="Helical" evidence="1">
    <location>
        <begin position="84"/>
        <end position="104"/>
    </location>
</feature>
<feature type="topological domain" description="Cytoplasmic" evidence="1">
    <location>
        <begin position="105"/>
        <end position="125"/>
    </location>
</feature>
<feature type="transmembrane region" description="Helical" evidence="1">
    <location>
        <begin position="126"/>
        <end position="146"/>
    </location>
</feature>
<feature type="topological domain" description="Extracellular" evidence="1">
    <location>
        <begin position="147"/>
        <end position="188"/>
    </location>
</feature>
<feature type="transmembrane region" description="Helical" evidence="1">
    <location>
        <begin position="189"/>
        <end position="209"/>
    </location>
</feature>
<feature type="topological domain" description="Cytoplasmic" evidence="1">
    <location>
        <begin position="210"/>
        <end position="229"/>
    </location>
</feature>
<feature type="transmembrane region" description="Helical" evidence="1">
    <location>
        <begin position="230"/>
        <end position="250"/>
    </location>
</feature>
<feature type="topological domain" description="Extracellular" evidence="1">
    <location>
        <begin position="251"/>
        <end position="257"/>
    </location>
</feature>
<feature type="transmembrane region" description="Helical" evidence="1">
    <location>
        <begin position="258"/>
        <end position="278"/>
    </location>
</feature>
<feature type="topological domain" description="Cytoplasmic" evidence="1">
    <location>
        <begin position="279"/>
        <end position="356"/>
    </location>
</feature>
<feature type="transmembrane region" description="Helical" evidence="1">
    <location>
        <begin position="357"/>
        <end position="377"/>
    </location>
</feature>
<feature type="topological domain" description="Extracellular" evidence="1">
    <location>
        <begin position="378"/>
        <end position="386"/>
    </location>
</feature>
<feature type="transmembrane region" description="Helical" evidence="1">
    <location>
        <begin position="387"/>
        <end position="407"/>
    </location>
</feature>
<feature type="topological domain" description="Cytoplasmic" evidence="1">
    <location>
        <begin position="408"/>
        <end position="428"/>
    </location>
</feature>
<feature type="transmembrane region" description="Helical" evidence="1">
    <location>
        <begin position="429"/>
        <end position="449"/>
    </location>
</feature>
<feature type="topological domain" description="Extracellular" evidence="1">
    <location>
        <begin position="450"/>
        <end position="459"/>
    </location>
</feature>
<feature type="transmembrane region" description="Helical" evidence="1">
    <location>
        <begin position="460"/>
        <end position="480"/>
    </location>
</feature>
<feature type="topological domain" description="Cytoplasmic" evidence="1">
    <location>
        <begin position="481"/>
        <end position="491"/>
    </location>
</feature>
<feature type="transmembrane region" description="Helical" evidence="1">
    <location>
        <begin position="492"/>
        <end position="512"/>
    </location>
</feature>
<feature type="topological domain" description="Extracellular" evidence="1">
    <location>
        <begin position="513"/>
        <end position="523"/>
    </location>
</feature>
<feature type="transmembrane region" description="Helical" evidence="1">
    <location>
        <begin position="524"/>
        <end position="544"/>
    </location>
</feature>
<feature type="topological domain" description="Cytoplasmic" evidence="1">
    <location>
        <begin position="545"/>
        <end position="555"/>
    </location>
</feature>
<feature type="region of interest" description="Disordered" evidence="2">
    <location>
        <begin position="289"/>
        <end position="311"/>
    </location>
</feature>
<reference key="1">
    <citation type="journal article" date="1996" name="EMBO J.">
        <title>Complete nucleotide sequence of Saccharomyces cerevisiae chromosome X.</title>
        <authorList>
            <person name="Galibert F."/>
            <person name="Alexandraki D."/>
            <person name="Baur A."/>
            <person name="Boles E."/>
            <person name="Chalwatzis N."/>
            <person name="Chuat J.-C."/>
            <person name="Coster F."/>
            <person name="Cziepluch C."/>
            <person name="de Haan M."/>
            <person name="Domdey H."/>
            <person name="Durand P."/>
            <person name="Entian K.-D."/>
            <person name="Gatius M."/>
            <person name="Goffeau A."/>
            <person name="Grivell L.A."/>
            <person name="Hennemann A."/>
            <person name="Herbert C.J."/>
            <person name="Heumann K."/>
            <person name="Hilger F."/>
            <person name="Hollenberg C.P."/>
            <person name="Huang M.-E."/>
            <person name="Jacq C."/>
            <person name="Jauniaux J.-C."/>
            <person name="Katsoulou C."/>
            <person name="Kirchrath L."/>
            <person name="Kleine K."/>
            <person name="Kordes E."/>
            <person name="Koetter P."/>
            <person name="Liebl S."/>
            <person name="Louis E.J."/>
            <person name="Manus V."/>
            <person name="Mewes H.-W."/>
            <person name="Miosga T."/>
            <person name="Obermaier B."/>
            <person name="Perea J."/>
            <person name="Pohl T.M."/>
            <person name="Portetelle D."/>
            <person name="Pujol A."/>
            <person name="Purnelle B."/>
            <person name="Ramezani Rad M."/>
            <person name="Rasmussen S.W."/>
            <person name="Rose M."/>
            <person name="Rossau R."/>
            <person name="Schaaff-Gerstenschlaeger I."/>
            <person name="Smits P.H.M."/>
            <person name="Scarcez T."/>
            <person name="Soriano N."/>
            <person name="To Van D."/>
            <person name="Tzermia M."/>
            <person name="Van Broekhoven A."/>
            <person name="Vandenbol M."/>
            <person name="Wedler H."/>
            <person name="von Wettstein D."/>
            <person name="Wambutt R."/>
            <person name="Zagulski M."/>
            <person name="Zollner A."/>
            <person name="Karpfinger-Hartl L."/>
        </authorList>
    </citation>
    <scope>NUCLEOTIDE SEQUENCE [LARGE SCALE GENOMIC DNA]</scope>
    <source>
        <strain>ATCC 204508 / S288c</strain>
    </source>
</reference>
<reference key="2">
    <citation type="journal article" date="2014" name="G3 (Bethesda)">
        <title>The reference genome sequence of Saccharomyces cerevisiae: Then and now.</title>
        <authorList>
            <person name="Engel S.R."/>
            <person name="Dietrich F.S."/>
            <person name="Fisk D.G."/>
            <person name="Binkley G."/>
            <person name="Balakrishnan R."/>
            <person name="Costanzo M.C."/>
            <person name="Dwight S.S."/>
            <person name="Hitz B.C."/>
            <person name="Karra K."/>
            <person name="Nash R.S."/>
            <person name="Weng S."/>
            <person name="Wong E.D."/>
            <person name="Lloyd P."/>
            <person name="Skrzypek M.S."/>
            <person name="Miyasato S.R."/>
            <person name="Simison M."/>
            <person name="Cherry J.M."/>
        </authorList>
    </citation>
    <scope>GENOME REANNOTATION</scope>
    <source>
        <strain>ATCC 204508 / S288c</strain>
    </source>
</reference>
<reference key="3">
    <citation type="journal article" date="2006" name="Proc. Natl. Acad. Sci. U.S.A.">
        <title>A global topology map of the Saccharomyces cerevisiae membrane proteome.</title>
        <authorList>
            <person name="Kim H."/>
            <person name="Melen K."/>
            <person name="Oesterberg M."/>
            <person name="von Heijne G."/>
        </authorList>
    </citation>
    <scope>TOPOLOGY [LARGE SCALE ANALYSIS]</scope>
    <source>
        <strain>ATCC 208353 / W303-1A</strain>
    </source>
</reference>
<dbReference type="EMBL" id="Z49438">
    <property type="protein sequence ID" value="CAA89458.1"/>
    <property type="molecule type" value="Genomic_DNA"/>
</dbReference>
<dbReference type="EMBL" id="BK006943">
    <property type="protein sequence ID" value="DAA08640.1"/>
    <property type="molecule type" value="Genomic_DNA"/>
</dbReference>
<dbReference type="PIR" id="S56946">
    <property type="entry name" value="S56946"/>
</dbReference>
<dbReference type="RefSeq" id="NP_012372.1">
    <property type="nucleotide sequence ID" value="NM_001181596.1"/>
</dbReference>
<dbReference type="SMR" id="P46996"/>
<dbReference type="BioGRID" id="33596">
    <property type="interactions" value="117"/>
</dbReference>
<dbReference type="DIP" id="DIP-8000N"/>
<dbReference type="FunCoup" id="P46996">
    <property type="interactions" value="137"/>
</dbReference>
<dbReference type="STRING" id="4932.YJL163C"/>
<dbReference type="TCDB" id="2.A.1.11.4">
    <property type="family name" value="the major facilitator superfamily (mfs)"/>
</dbReference>
<dbReference type="iPTMnet" id="P46996"/>
<dbReference type="PaxDb" id="4932-YJL163C"/>
<dbReference type="PeptideAtlas" id="P46996"/>
<dbReference type="EnsemblFungi" id="YJL163C_mRNA">
    <property type="protein sequence ID" value="YJL163C"/>
    <property type="gene ID" value="YJL163C"/>
</dbReference>
<dbReference type="GeneID" id="853276"/>
<dbReference type="KEGG" id="sce:YJL163C"/>
<dbReference type="AGR" id="SGD:S000003699"/>
<dbReference type="SGD" id="S000003699">
    <property type="gene designation" value="YJL163C"/>
</dbReference>
<dbReference type="VEuPathDB" id="FungiDB:YJL163C"/>
<dbReference type="eggNOG" id="KOG2816">
    <property type="taxonomic scope" value="Eukaryota"/>
</dbReference>
<dbReference type="GeneTree" id="ENSGT00950000183096"/>
<dbReference type="HOGENOM" id="CLU_017517_2_1_1"/>
<dbReference type="InParanoid" id="P46996"/>
<dbReference type="OMA" id="VYGPMYS"/>
<dbReference type="OrthoDB" id="3026777at2759"/>
<dbReference type="BioCyc" id="YEAST:G3O-31603-MONOMER"/>
<dbReference type="Reactome" id="R-SCE-196757">
    <property type="pathway name" value="Metabolism of folate and pterines"/>
</dbReference>
<dbReference type="Reactome" id="R-SCE-917937">
    <property type="pathway name" value="Iron uptake and transport"/>
</dbReference>
<dbReference type="Reactome" id="R-SCE-9707616">
    <property type="pathway name" value="Heme signaling"/>
</dbReference>
<dbReference type="BioGRID-ORCS" id="853276">
    <property type="hits" value="0 hits in 10 CRISPR screens"/>
</dbReference>
<dbReference type="PRO" id="PR:P46996"/>
<dbReference type="Proteomes" id="UP000002311">
    <property type="component" value="Chromosome X"/>
</dbReference>
<dbReference type="RNAct" id="P46996">
    <property type="molecule type" value="protein"/>
</dbReference>
<dbReference type="GO" id="GO:0000329">
    <property type="term" value="C:fungal-type vacuole membrane"/>
    <property type="evidence" value="ECO:0007005"/>
    <property type="project" value="SGD"/>
</dbReference>
<dbReference type="GO" id="GO:0016020">
    <property type="term" value="C:membrane"/>
    <property type="evidence" value="ECO:0000318"/>
    <property type="project" value="GO_Central"/>
</dbReference>
<dbReference type="GO" id="GO:0022857">
    <property type="term" value="F:transmembrane transporter activity"/>
    <property type="evidence" value="ECO:0000318"/>
    <property type="project" value="GO_Central"/>
</dbReference>
<dbReference type="GO" id="GO:0055085">
    <property type="term" value="P:transmembrane transport"/>
    <property type="evidence" value="ECO:0000318"/>
    <property type="project" value="GO_Central"/>
</dbReference>
<dbReference type="Gene3D" id="1.20.1250.20">
    <property type="entry name" value="MFS general substrate transporter like domains"/>
    <property type="match status" value="1"/>
</dbReference>
<dbReference type="InterPro" id="IPR011701">
    <property type="entry name" value="MFS"/>
</dbReference>
<dbReference type="InterPro" id="IPR036259">
    <property type="entry name" value="MFS_trans_sf"/>
</dbReference>
<dbReference type="PANTHER" id="PTHR23507:SF1">
    <property type="entry name" value="FI18259P1-RELATED"/>
    <property type="match status" value="1"/>
</dbReference>
<dbReference type="PANTHER" id="PTHR23507">
    <property type="entry name" value="ZGC:174356"/>
    <property type="match status" value="1"/>
</dbReference>
<dbReference type="Pfam" id="PF07690">
    <property type="entry name" value="MFS_1"/>
    <property type="match status" value="1"/>
</dbReference>
<dbReference type="SUPFAM" id="SSF103473">
    <property type="entry name" value="MFS general substrate transporter"/>
    <property type="match status" value="1"/>
</dbReference>
<protein>
    <recommendedName>
        <fullName>Uncharacterized membrane protein YJL163C</fullName>
    </recommendedName>
</protein>
<name>YJQ3_YEAST</name>
<accession>P46996</accession>
<accession>D6VW24</accession>